<gene>
    <name type="primary">CNR1</name>
</gene>
<evidence type="ECO:0000250" key="1">
    <source>
        <dbReference type="UniProtKB" id="P20272"/>
    </source>
</evidence>
<evidence type="ECO:0000250" key="2">
    <source>
        <dbReference type="UniProtKB" id="P21554"/>
    </source>
</evidence>
<evidence type="ECO:0000250" key="3">
    <source>
        <dbReference type="UniProtKB" id="P47746"/>
    </source>
</evidence>
<evidence type="ECO:0000255" key="4"/>
<evidence type="ECO:0000255" key="5">
    <source>
        <dbReference type="PROSITE-ProRule" id="PRU00521"/>
    </source>
</evidence>
<feature type="chain" id="PRO_0000069322" description="Cannabinoid receptor 1">
    <location>
        <begin position="1"/>
        <end position="473"/>
    </location>
</feature>
<feature type="topological domain" description="Extracellular" evidence="2">
    <location>
        <begin position="1"/>
        <end position="118"/>
    </location>
</feature>
<feature type="transmembrane region" description="Helical; Name=1" evidence="2">
    <location>
        <begin position="119"/>
        <end position="144"/>
    </location>
</feature>
<feature type="topological domain" description="Cytoplasmic" evidence="2">
    <location>
        <begin position="145"/>
        <end position="156"/>
    </location>
</feature>
<feature type="transmembrane region" description="Helical; Name=2" evidence="2">
    <location>
        <begin position="157"/>
        <end position="177"/>
    </location>
</feature>
<feature type="topological domain" description="Extracellular" evidence="2">
    <location>
        <begin position="178"/>
        <end position="189"/>
    </location>
</feature>
<feature type="transmembrane region" description="Helical; Name=3" evidence="2">
    <location>
        <begin position="190"/>
        <end position="214"/>
    </location>
</feature>
<feature type="topological domain" description="Cytoplasmic" evidence="2">
    <location>
        <begin position="215"/>
        <end position="234"/>
    </location>
</feature>
<feature type="transmembrane region" description="Helical; Name=4" evidence="2">
    <location>
        <begin position="235"/>
        <end position="257"/>
    </location>
</feature>
<feature type="topological domain" description="Extracellular" evidence="2">
    <location>
        <begin position="258"/>
        <end position="275"/>
    </location>
</feature>
<feature type="transmembrane region" description="Helical; Name=5" evidence="2">
    <location>
        <begin position="276"/>
        <end position="301"/>
    </location>
</feature>
<feature type="topological domain" description="Cytoplasmic" evidence="2">
    <location>
        <begin position="302"/>
        <end position="346"/>
    </location>
</feature>
<feature type="transmembrane region" description="Helical; Name=6" evidence="2">
    <location>
        <begin position="347"/>
        <end position="367"/>
    </location>
</feature>
<feature type="topological domain" description="Extracellular" evidence="2">
    <location>
        <begin position="368"/>
        <end position="379"/>
    </location>
</feature>
<feature type="transmembrane region" description="Helical; Name=7" evidence="2">
    <location>
        <begin position="380"/>
        <end position="401"/>
    </location>
</feature>
<feature type="topological domain" description="Cytoplasmic" evidence="2">
    <location>
        <begin position="402"/>
        <end position="473"/>
    </location>
</feature>
<feature type="region of interest" description="Required for mitochondrial localization" evidence="3">
    <location>
        <begin position="2"/>
        <end position="23"/>
    </location>
</feature>
<feature type="lipid moiety-binding region" description="S-palmitoyl cysteine" evidence="2">
    <location>
        <position position="417"/>
    </location>
</feature>
<feature type="glycosylation site" description="N-linked (GlcNAc...) asparagine" evidence="4">
    <location>
        <position position="79"/>
    </location>
</feature>
<feature type="glycosylation site" description="N-linked (GlcNAc...) asparagine" evidence="4">
    <location>
        <position position="85"/>
    </location>
</feature>
<name>CNR1_TARGR</name>
<protein>
    <recommendedName>
        <fullName>Cannabinoid receptor 1</fullName>
        <shortName>CB-R</shortName>
        <shortName>CB1</shortName>
    </recommendedName>
</protein>
<reference key="1">
    <citation type="journal article" date="2000" name="J. Neurochem.">
        <title>Behavorial, pharmacological, and molecular characterization of an amphibian cannabinoid receptor.</title>
        <authorList>
            <person name="Soderstrom K."/>
            <person name="Leid M."/>
            <person name="Moore F.L."/>
            <person name="Murray T.F."/>
        </authorList>
    </citation>
    <scope>NUCLEOTIDE SEQUENCE [MRNA]</scope>
</reference>
<dbReference type="EMBL" id="AF181894">
    <property type="protein sequence ID" value="AAD56029.1"/>
    <property type="molecule type" value="mRNA"/>
</dbReference>
<dbReference type="SMR" id="Q9PUI7"/>
<dbReference type="BindingDB" id="Q9PUI7"/>
<dbReference type="GlyCosmos" id="Q9PUI7">
    <property type="glycosylation" value="2 sites, No reported glycans"/>
</dbReference>
<dbReference type="GO" id="GO:0030424">
    <property type="term" value="C:axon"/>
    <property type="evidence" value="ECO:0007669"/>
    <property type="project" value="UniProtKB-SubCell"/>
</dbReference>
<dbReference type="GO" id="GO:0005741">
    <property type="term" value="C:mitochondrial outer membrane"/>
    <property type="evidence" value="ECO:0007669"/>
    <property type="project" value="UniProtKB-SubCell"/>
</dbReference>
<dbReference type="GO" id="GO:0005886">
    <property type="term" value="C:plasma membrane"/>
    <property type="evidence" value="ECO:0007669"/>
    <property type="project" value="UniProtKB-SubCell"/>
</dbReference>
<dbReference type="GO" id="GO:0098793">
    <property type="term" value="C:presynapse"/>
    <property type="evidence" value="ECO:0007669"/>
    <property type="project" value="UniProtKB-SubCell"/>
</dbReference>
<dbReference type="GO" id="GO:0004949">
    <property type="term" value="F:cannabinoid receptor activity"/>
    <property type="evidence" value="ECO:0007669"/>
    <property type="project" value="InterPro"/>
</dbReference>
<dbReference type="CDD" id="cd15340">
    <property type="entry name" value="7tmA_CB1"/>
    <property type="match status" value="1"/>
</dbReference>
<dbReference type="FunFam" id="1.20.1070.10:FF:000072">
    <property type="entry name" value="Cannabinoid receptor 1"/>
    <property type="match status" value="1"/>
</dbReference>
<dbReference type="Gene3D" id="1.20.1070.10">
    <property type="entry name" value="Rhodopsin 7-helix transmembrane proteins"/>
    <property type="match status" value="1"/>
</dbReference>
<dbReference type="InterPro" id="IPR000810">
    <property type="entry name" value="Canbinoid_rcpt_1"/>
</dbReference>
<dbReference type="InterPro" id="IPR002230">
    <property type="entry name" value="Cnbnoid_rcpt"/>
</dbReference>
<dbReference type="InterPro" id="IPR000276">
    <property type="entry name" value="GPCR_Rhodpsn"/>
</dbReference>
<dbReference type="InterPro" id="IPR017452">
    <property type="entry name" value="GPCR_Rhodpsn_7TM"/>
</dbReference>
<dbReference type="PANTHER" id="PTHR22750">
    <property type="entry name" value="G-PROTEIN COUPLED RECEPTOR"/>
    <property type="match status" value="1"/>
</dbReference>
<dbReference type="Pfam" id="PF00001">
    <property type="entry name" value="7tm_1"/>
    <property type="match status" value="1"/>
</dbReference>
<dbReference type="PIRSF" id="PIRSF037995">
    <property type="entry name" value="Cnoid_rcpt_1"/>
    <property type="match status" value="1"/>
</dbReference>
<dbReference type="PRINTS" id="PR00522">
    <property type="entry name" value="CANABINOID1R"/>
</dbReference>
<dbReference type="PRINTS" id="PR00362">
    <property type="entry name" value="CANNABINOIDR"/>
</dbReference>
<dbReference type="PRINTS" id="PR00237">
    <property type="entry name" value="GPCRRHODOPSN"/>
</dbReference>
<dbReference type="SMART" id="SM01381">
    <property type="entry name" value="7TM_GPCR_Srsx"/>
    <property type="match status" value="1"/>
</dbReference>
<dbReference type="SUPFAM" id="SSF81321">
    <property type="entry name" value="Family A G protein-coupled receptor-like"/>
    <property type="match status" value="1"/>
</dbReference>
<dbReference type="PROSITE" id="PS00237">
    <property type="entry name" value="G_PROTEIN_RECEP_F1_1"/>
    <property type="match status" value="1"/>
</dbReference>
<dbReference type="PROSITE" id="PS50262">
    <property type="entry name" value="G_PROTEIN_RECEP_F1_2"/>
    <property type="match status" value="1"/>
</dbReference>
<proteinExistence type="evidence at transcript level"/>
<keyword id="KW-1003">Cell membrane</keyword>
<keyword id="KW-0966">Cell projection</keyword>
<keyword id="KW-0297">G-protein coupled receptor</keyword>
<keyword id="KW-0325">Glycoprotein</keyword>
<keyword id="KW-0449">Lipoprotein</keyword>
<keyword id="KW-0472">Membrane</keyword>
<keyword id="KW-0496">Mitochondrion</keyword>
<keyword id="KW-1000">Mitochondrion outer membrane</keyword>
<keyword id="KW-0564">Palmitate</keyword>
<keyword id="KW-0675">Receptor</keyword>
<keyword id="KW-0770">Synapse</keyword>
<keyword id="KW-0807">Transducer</keyword>
<keyword id="KW-0812">Transmembrane</keyword>
<keyword id="KW-1133">Transmembrane helix</keyword>
<organism>
    <name type="scientific">Taricha granulosa</name>
    <name type="common">Roughskin newt</name>
    <dbReference type="NCBI Taxonomy" id="8321"/>
    <lineage>
        <taxon>Eukaryota</taxon>
        <taxon>Metazoa</taxon>
        <taxon>Chordata</taxon>
        <taxon>Craniata</taxon>
        <taxon>Vertebrata</taxon>
        <taxon>Euteleostomi</taxon>
        <taxon>Amphibia</taxon>
        <taxon>Batrachia</taxon>
        <taxon>Caudata</taxon>
        <taxon>Salamandroidea</taxon>
        <taxon>Salamandridae</taxon>
        <taxon>Pleurodelinae</taxon>
        <taxon>Taricha</taxon>
    </lineage>
</organism>
<comment type="function">
    <text evidence="2 3">G-protein coupled receptor for cannabinoids (By similarity). Mediates many cannabinoid-induced effects in the central nervous system (CNS), as well as in peripheral tissues (By similarity). Regulates cellular respiration and energy production in response to cannabinoids (By similarity). Signaling typically involves reduction in cyclic AMP (By similarity).</text>
</comment>
<comment type="activity regulation">
    <text evidence="2">Hemopressin, a peptide derived from hemoglobin subunit alpha (HBA1 and/or HBA2), acts as an antagonist peptide: hemopressin-binding efficiently blocks cannabinoid receptor CNR1 and subsequent signaling.</text>
</comment>
<comment type="subcellular location">
    <subcellularLocation>
        <location evidence="3">Cell membrane</location>
        <topology evidence="2">Multi-pass membrane protein</topology>
    </subcellularLocation>
    <subcellularLocation>
        <location evidence="3">Mitochondrion outer membrane</location>
    </subcellularLocation>
    <subcellularLocation>
        <location evidence="1">Cell projection</location>
        <location evidence="1">Axon</location>
    </subcellularLocation>
    <subcellularLocation>
        <location evidence="1">Presynapse</location>
    </subcellularLocation>
    <text evidence="3">Unexpectedly, in the mitochondria, the C-terminus is located in the mitochondrial intermembrane space, a compartment topologically considered as extracellular. In canonical seven-transmembrane G-protein coupled receptors, the C-terminus is cytosolic.</text>
</comment>
<comment type="PTM">
    <text evidence="2">Palmitoylation at Cys-417 is important for recruitment at both plasma membrane and lipid rafts and association with G protein alpha subunits.</text>
</comment>
<comment type="similarity">
    <text evidence="5">Belongs to the G-protein coupled receptor 1 family.</text>
</comment>
<accession>Q9PUI7</accession>
<sequence>MKSILDGLADTTFRTITTDLLYMGSNDVQYEDTKGEMASKLGYFPQKLPLSSFRRDHSPDKMTIGDDNLLSFYPLDQFNVTEFFNRSVSTFKENDDNLKCGENFMDMECFMILTASQQLIIAVLSLTLGTFTVLENFLVLCVILQSRTLRCRPSYHFIGSLAVADLLGSVIFVYSFLDFHVFHRKDSSNVFLFKLGGVTASFTASVGSLFLTAIDRYISIHRPLAYKRIVTRTKAVIAFCVMWTIAIIIAVLPLLGWNCKKLKSVCSDIFPLIDENYLMFWIGVTSILLLFIVYAYVYILWKAHSHAVRMLQRGTQKSIIIHTSEDGKVQITRPEQTRMDIRLAKTLVLILVVLIICWGPLLAIMVYDVFGKMNNPIKTVFAFCSMLCLMDSTVNPIIYALRSQDLRHAFLEQCPPCEGTSQPLDNSMESDCQHRHGNNAGNVHRAAENCIKSTVKIAKVTMSVSTETSGEAV</sequence>